<feature type="chain" id="PRO_0000328410" description="Alpha,alpha-trehalose-phosphate synthase [UDP-forming] A">
    <location>
        <begin position="1"/>
        <end position="733"/>
    </location>
</feature>
<proteinExistence type="evidence at transcript level"/>
<accession>Q54K57</accession>
<organism>
    <name type="scientific">Dictyostelium discoideum</name>
    <name type="common">Social amoeba</name>
    <dbReference type="NCBI Taxonomy" id="44689"/>
    <lineage>
        <taxon>Eukaryota</taxon>
        <taxon>Amoebozoa</taxon>
        <taxon>Evosea</taxon>
        <taxon>Eumycetozoa</taxon>
        <taxon>Dictyostelia</taxon>
        <taxon>Dictyosteliales</taxon>
        <taxon>Dictyosteliaceae</taxon>
        <taxon>Dictyostelium</taxon>
    </lineage>
</organism>
<evidence type="ECO:0000269" key="1">
    <source>
    </source>
</evidence>
<evidence type="ECO:0000269" key="2">
    <source>
    </source>
</evidence>
<evidence type="ECO:0000305" key="3"/>
<protein>
    <recommendedName>
        <fullName>Alpha,alpha-trehalose-phosphate synthase [UDP-forming] A</fullName>
        <ecNumber>2.4.1.15</ecNumber>
    </recommendedName>
    <alternativeName>
        <fullName>Trehalose-6-phosphate synthase A</fullName>
    </alternativeName>
    <alternativeName>
        <fullName>UDP-glucose-glucosephosphate glucosyltransferase A</fullName>
    </alternativeName>
</protein>
<dbReference type="EC" id="2.4.1.15"/>
<dbReference type="EMBL" id="AAFI02000103">
    <property type="protein sequence ID" value="EAL63637.1"/>
    <property type="molecule type" value="Genomic_DNA"/>
</dbReference>
<dbReference type="RefSeq" id="XP_637107.1">
    <property type="nucleotide sequence ID" value="XM_632015.1"/>
</dbReference>
<dbReference type="SMR" id="Q54K57"/>
<dbReference type="FunCoup" id="Q54K57">
    <property type="interactions" value="32"/>
</dbReference>
<dbReference type="STRING" id="44689.Q54K57"/>
<dbReference type="PaxDb" id="44689-DDB0231979"/>
<dbReference type="EnsemblProtists" id="EAL63637">
    <property type="protein sequence ID" value="EAL63637"/>
    <property type="gene ID" value="DDB_G0287657"/>
</dbReference>
<dbReference type="GeneID" id="8626202"/>
<dbReference type="KEGG" id="ddi:DDB_G0287657"/>
<dbReference type="dictyBase" id="DDB_G0287657">
    <property type="gene designation" value="tpsA"/>
</dbReference>
<dbReference type="VEuPathDB" id="AmoebaDB:DDB_G0287657"/>
<dbReference type="eggNOG" id="KOG1050">
    <property type="taxonomic scope" value="Eukaryota"/>
</dbReference>
<dbReference type="HOGENOM" id="CLU_002351_3_3_1"/>
<dbReference type="InParanoid" id="Q54K57"/>
<dbReference type="OMA" id="QTEAHYY"/>
<dbReference type="PhylomeDB" id="Q54K57"/>
<dbReference type="PRO" id="PR:Q54K57"/>
<dbReference type="Proteomes" id="UP000002195">
    <property type="component" value="Chromosome 5"/>
</dbReference>
<dbReference type="GO" id="GO:0003825">
    <property type="term" value="F:alpha,alpha-trehalose-phosphate synthase (UDP-forming) activity"/>
    <property type="evidence" value="ECO:0007669"/>
    <property type="project" value="UniProtKB-EC"/>
</dbReference>
<dbReference type="GO" id="GO:0046686">
    <property type="term" value="P:response to cadmium ion"/>
    <property type="evidence" value="ECO:0007007"/>
    <property type="project" value="dictyBase"/>
</dbReference>
<dbReference type="GO" id="GO:0005992">
    <property type="term" value="P:trehalose biosynthetic process"/>
    <property type="evidence" value="ECO:0000318"/>
    <property type="project" value="GO_Central"/>
</dbReference>
<dbReference type="CDD" id="cd03788">
    <property type="entry name" value="GT20_TPS"/>
    <property type="match status" value="1"/>
</dbReference>
<dbReference type="CDD" id="cd01627">
    <property type="entry name" value="HAD_TPP"/>
    <property type="match status" value="1"/>
</dbReference>
<dbReference type="FunFam" id="3.40.50.2000:FF:000046">
    <property type="entry name" value="alpha,alpha-trehalose-phosphate synthase [UDP-forming] 1"/>
    <property type="match status" value="1"/>
</dbReference>
<dbReference type="FunFam" id="3.40.50.2000:FF:000007">
    <property type="entry name" value="Trehalose-6-phosphate synthase"/>
    <property type="match status" value="1"/>
</dbReference>
<dbReference type="Gene3D" id="3.40.50.2000">
    <property type="entry name" value="Glycogen Phosphorylase B"/>
    <property type="match status" value="2"/>
</dbReference>
<dbReference type="Gene3D" id="3.40.50.1000">
    <property type="entry name" value="HAD superfamily/HAD-like"/>
    <property type="match status" value="1"/>
</dbReference>
<dbReference type="Gene3D" id="3.30.70.1020">
    <property type="entry name" value="Trehalose-6-phosphate phosphatase related protein, domain 2"/>
    <property type="match status" value="1"/>
</dbReference>
<dbReference type="InterPro" id="IPR001830">
    <property type="entry name" value="Glyco_trans_20"/>
</dbReference>
<dbReference type="InterPro" id="IPR036412">
    <property type="entry name" value="HAD-like_sf"/>
</dbReference>
<dbReference type="InterPro" id="IPR023214">
    <property type="entry name" value="HAD_sf"/>
</dbReference>
<dbReference type="InterPro" id="IPR012766">
    <property type="entry name" value="Trehalose_OtsA"/>
</dbReference>
<dbReference type="InterPro" id="IPR003337">
    <property type="entry name" value="Trehalose_PPase"/>
</dbReference>
<dbReference type="NCBIfam" id="NF011071">
    <property type="entry name" value="PRK14501.1"/>
    <property type="match status" value="1"/>
</dbReference>
<dbReference type="NCBIfam" id="TIGR00685">
    <property type="entry name" value="T6PP"/>
    <property type="match status" value="1"/>
</dbReference>
<dbReference type="NCBIfam" id="TIGR02400">
    <property type="entry name" value="trehalose_OtsA"/>
    <property type="match status" value="1"/>
</dbReference>
<dbReference type="PANTHER" id="PTHR10788:SF106">
    <property type="entry name" value="BCDNA.GH08860"/>
    <property type="match status" value="1"/>
</dbReference>
<dbReference type="PANTHER" id="PTHR10788">
    <property type="entry name" value="TREHALOSE-6-PHOSPHATE SYNTHASE"/>
    <property type="match status" value="1"/>
</dbReference>
<dbReference type="Pfam" id="PF00982">
    <property type="entry name" value="Glyco_transf_20"/>
    <property type="match status" value="1"/>
</dbReference>
<dbReference type="Pfam" id="PF02358">
    <property type="entry name" value="Trehalose_PPase"/>
    <property type="match status" value="1"/>
</dbReference>
<dbReference type="SUPFAM" id="SSF56784">
    <property type="entry name" value="HAD-like"/>
    <property type="match status" value="1"/>
</dbReference>
<dbReference type="SUPFAM" id="SSF53756">
    <property type="entry name" value="UDP-Glycosyltransferase/glycogen phosphorylase"/>
    <property type="match status" value="1"/>
</dbReference>
<name>TPSA_DICDI</name>
<reference key="1">
    <citation type="journal article" date="2005" name="Nature">
        <title>The genome of the social amoeba Dictyostelium discoideum.</title>
        <authorList>
            <person name="Eichinger L."/>
            <person name="Pachebat J.A."/>
            <person name="Gloeckner G."/>
            <person name="Rajandream M.A."/>
            <person name="Sucgang R."/>
            <person name="Berriman M."/>
            <person name="Song J."/>
            <person name="Olsen R."/>
            <person name="Szafranski K."/>
            <person name="Xu Q."/>
            <person name="Tunggal B."/>
            <person name="Kummerfeld S."/>
            <person name="Madera M."/>
            <person name="Konfortov B.A."/>
            <person name="Rivero F."/>
            <person name="Bankier A.T."/>
            <person name="Lehmann R."/>
            <person name="Hamlin N."/>
            <person name="Davies R."/>
            <person name="Gaudet P."/>
            <person name="Fey P."/>
            <person name="Pilcher K."/>
            <person name="Chen G."/>
            <person name="Saunders D."/>
            <person name="Sodergren E.J."/>
            <person name="Davis P."/>
            <person name="Kerhornou A."/>
            <person name="Nie X."/>
            <person name="Hall N."/>
            <person name="Anjard C."/>
            <person name="Hemphill L."/>
            <person name="Bason N."/>
            <person name="Farbrother P."/>
            <person name="Desany B."/>
            <person name="Just E."/>
            <person name="Morio T."/>
            <person name="Rost R."/>
            <person name="Churcher C.M."/>
            <person name="Cooper J."/>
            <person name="Haydock S."/>
            <person name="van Driessche N."/>
            <person name="Cronin A."/>
            <person name="Goodhead I."/>
            <person name="Muzny D.M."/>
            <person name="Mourier T."/>
            <person name="Pain A."/>
            <person name="Lu M."/>
            <person name="Harper D."/>
            <person name="Lindsay R."/>
            <person name="Hauser H."/>
            <person name="James K.D."/>
            <person name="Quiles M."/>
            <person name="Madan Babu M."/>
            <person name="Saito T."/>
            <person name="Buchrieser C."/>
            <person name="Wardroper A."/>
            <person name="Felder M."/>
            <person name="Thangavelu M."/>
            <person name="Johnson D."/>
            <person name="Knights A."/>
            <person name="Loulseged H."/>
            <person name="Mungall K.L."/>
            <person name="Oliver K."/>
            <person name="Price C."/>
            <person name="Quail M.A."/>
            <person name="Urushihara H."/>
            <person name="Hernandez J."/>
            <person name="Rabbinowitsch E."/>
            <person name="Steffen D."/>
            <person name="Sanders M."/>
            <person name="Ma J."/>
            <person name="Kohara Y."/>
            <person name="Sharp S."/>
            <person name="Simmonds M.N."/>
            <person name="Spiegler S."/>
            <person name="Tivey A."/>
            <person name="Sugano S."/>
            <person name="White B."/>
            <person name="Walker D."/>
            <person name="Woodward J.R."/>
            <person name="Winckler T."/>
            <person name="Tanaka Y."/>
            <person name="Shaulsky G."/>
            <person name="Schleicher M."/>
            <person name="Weinstock G.M."/>
            <person name="Rosenthal A."/>
            <person name="Cox E.C."/>
            <person name="Chisholm R.L."/>
            <person name="Gibbs R.A."/>
            <person name="Loomis W.F."/>
            <person name="Platzer M."/>
            <person name="Kay R.R."/>
            <person name="Williams J.G."/>
            <person name="Dear P.H."/>
            <person name="Noegel A.A."/>
            <person name="Barrell B.G."/>
            <person name="Kuspa A."/>
        </authorList>
    </citation>
    <scope>NUCLEOTIDE SEQUENCE [LARGE SCALE GENOMIC DNA]</scope>
    <source>
        <strain>AX4</strain>
    </source>
</reference>
<reference key="2">
    <citation type="journal article" date="1979" name="Arch. Biochem. Biophys.">
        <title>Trehalose 6-phosphate synthase from Dictyostelium discoideum: partial purification and characterization of the enzyme from young sorocarps.</title>
        <authorList>
            <person name="Killick K.A."/>
        </authorList>
    </citation>
    <scope>FUNCTION</scope>
</reference>
<reference key="3">
    <citation type="journal article" date="2001" name="Mol. Biol. Cell">
        <title>Expression patterns of cell-type-specific genes in Dictyostelium.</title>
        <authorList>
            <person name="Iranfar N."/>
            <person name="Fuller D."/>
            <person name="Sasik R."/>
            <person name="Hwa T."/>
            <person name="Laub M."/>
            <person name="Loomis W.F."/>
        </authorList>
    </citation>
    <scope>DEVELOPMENTAL STAGE</scope>
    <source>
        <strain>NC-4</strain>
    </source>
</reference>
<sequence length="733" mass="83717">MNENDNNLENETGFSGRLIVVSNRLPVSIKKESNGKWSCKMSSGGLVAALSGLKSNFIWVGWIGAEIEEDDRKEIKELLWKDYSCIPVFLSEKVANEHYNGFSNGVLWPLFHYLPGDLDYDDRIWNSYVEANEQFSSVVAEILKPNDLVWVHDYHMMLLPEILKQKKPDARIGFFLHIPFPSSEIFRVLPCRKEILLGILNCCLIGFHTYDYARHFLKSCTRIVGLETAPNGVYFKDRFVQVGVFPVGIDPDKFFESLKTTQVQNRIKELKESFEGTKVLIGIDRLDYIKGIPQKLQAIERLFQKYPEWKGKLVLIQVAVPSRQDVEEYQKLKKEVEELVGRINGLYGSIGYSPIHYLFQSVDPSELTALYNISDAALITSIRDGMNLVAQEYIVCQTENNGVLILSEFTGAAQSLSGAVMINPWNTEEVADSIHNSLLMPPEEREEKHQMLLKYVTKHTASHWGLGFVKELNKASSNTDKMVTIQKLDIEKVVDIYKQSKRRLLIFAYDGTLIPYNNVPQLSRPSQELLNSFDILSNDPKTDVYILSGRDKKTLSEWFLGIQIGLSAEYGCFFKLPESTEWEQQVPSMDLSWKETIRPLFKYFTLRTPGSFFEEKEMLFTWHYRNADPIFGSIQARELHLHLDNLPLDVIVGDKTLGVRSYNINPLSSMKKVITDTIPKGLDLILLIGDTHIHPSELPTFDGKIFNISVGKKSVKDSYHLSDPAEVNYLIIN</sequence>
<comment type="function">
    <text evidence="2">Synthesizes trehalose 6-phosphate, the precursor for the production of trehalose, the main carbohydrate storage reserve of the dormant spore. Trehalose accumulates in both prestalk and prespore cells and then is rapidly metabolized during terminal differentiation of stalk cells, while being stored in spores, where it serves as the principal energy and carbon source for germination.</text>
</comment>
<comment type="catalytic activity">
    <reaction>
        <text>D-glucose 6-phosphate + UDP-alpha-D-glucose = alpha,alpha-trehalose 6-phosphate + UDP + H(+)</text>
        <dbReference type="Rhea" id="RHEA:18889"/>
        <dbReference type="ChEBI" id="CHEBI:15378"/>
        <dbReference type="ChEBI" id="CHEBI:58223"/>
        <dbReference type="ChEBI" id="CHEBI:58429"/>
        <dbReference type="ChEBI" id="CHEBI:58885"/>
        <dbReference type="ChEBI" id="CHEBI:61548"/>
        <dbReference type="EC" id="2.4.1.15"/>
    </reaction>
</comment>
<comment type="developmental stage">
    <text evidence="1">Expressed during aggregation, reaching a peak at 12-16 hours. Accumulates in prestalk cells and, to a lesser extent, in prespore cells as well.</text>
</comment>
<comment type="similarity">
    <text evidence="3">In the N-terminal section; belongs to the glycosyltransferase 20 family.</text>
</comment>
<comment type="similarity">
    <text evidence="3">In the C-terminal section; belongs to the trehalose phosphatase family.</text>
</comment>
<keyword id="KW-0119">Carbohydrate metabolism</keyword>
<keyword id="KW-0328">Glycosyltransferase</keyword>
<keyword id="KW-1185">Reference proteome</keyword>
<keyword id="KW-0808">Transferase</keyword>
<gene>
    <name type="primary">tpsA</name>
    <name type="ORF">DDB_G0287657</name>
</gene>